<protein>
    <recommendedName>
        <fullName evidence="1">Thymidylate kinase</fullName>
        <ecNumber evidence="1">2.7.4.9</ecNumber>
    </recommendedName>
    <alternativeName>
        <fullName evidence="1">dTMP kinase</fullName>
    </alternativeName>
</protein>
<feature type="chain" id="PRO_1000023307" description="Thymidylate kinase">
    <location>
        <begin position="1"/>
        <end position="191"/>
    </location>
</feature>
<feature type="binding site" evidence="1">
    <location>
        <begin position="7"/>
        <end position="14"/>
    </location>
    <ligand>
        <name>ATP</name>
        <dbReference type="ChEBI" id="CHEBI:30616"/>
    </ligand>
</feature>
<reference key="1">
    <citation type="journal article" date="2008" name="Appl. Environ. Microbiol.">
        <title>Genome of the epsilonproteobacterial chemolithoautotroph Sulfurimonas denitrificans.</title>
        <authorList>
            <person name="Sievert S.M."/>
            <person name="Scott K.M."/>
            <person name="Klotz M.G."/>
            <person name="Chain P.S.G."/>
            <person name="Hauser L.J."/>
            <person name="Hemp J."/>
            <person name="Huegler M."/>
            <person name="Land M."/>
            <person name="Lapidus A."/>
            <person name="Larimer F.W."/>
            <person name="Lucas S."/>
            <person name="Malfatti S.A."/>
            <person name="Meyer F."/>
            <person name="Paulsen I.T."/>
            <person name="Ren Q."/>
            <person name="Simon J."/>
            <person name="Bailey K."/>
            <person name="Diaz E."/>
            <person name="Fitzpatrick K.A."/>
            <person name="Glover B."/>
            <person name="Gwatney N."/>
            <person name="Korajkic A."/>
            <person name="Long A."/>
            <person name="Mobberley J.M."/>
            <person name="Pantry S.N."/>
            <person name="Pazder G."/>
            <person name="Peterson S."/>
            <person name="Quintanilla J.D."/>
            <person name="Sprinkle R."/>
            <person name="Stephens J."/>
            <person name="Thomas P."/>
            <person name="Vaughn R."/>
            <person name="Weber M.J."/>
            <person name="Wooten L.L."/>
        </authorList>
    </citation>
    <scope>NUCLEOTIDE SEQUENCE [LARGE SCALE GENOMIC DNA]</scope>
    <source>
        <strain>ATCC 33889 / DSM 1251</strain>
    </source>
</reference>
<sequence>MYIAIEGIDTAGKSTQIAKLQEHFSDAIITKEPGGTEAGKEIREIVLNAKIKSKKAEFLLFLADRAEHIQEVIEPNLSKMIISDRSVVSGVAYALVQGEISETAILHLNRFATGGIYPQKIFLLQLTNEELSLRLSQKKLDGIELRGIEYLLKIQDALIKASNLLNIELVLIDATKNIDSITQEILNNINI</sequence>
<gene>
    <name evidence="1" type="primary">tmk</name>
    <name type="ordered locus">Suden_1126</name>
</gene>
<organism>
    <name type="scientific">Sulfurimonas denitrificans (strain ATCC 33889 / DSM 1251)</name>
    <name type="common">Thiomicrospira denitrificans (strain ATCC 33889 / DSM 1251)</name>
    <dbReference type="NCBI Taxonomy" id="326298"/>
    <lineage>
        <taxon>Bacteria</taxon>
        <taxon>Pseudomonadati</taxon>
        <taxon>Campylobacterota</taxon>
        <taxon>Epsilonproteobacteria</taxon>
        <taxon>Campylobacterales</taxon>
        <taxon>Sulfurimonadaceae</taxon>
        <taxon>Sulfurimonas</taxon>
    </lineage>
</organism>
<comment type="function">
    <text evidence="1">Phosphorylation of dTMP to form dTDP in both de novo and salvage pathways of dTTP synthesis.</text>
</comment>
<comment type="catalytic activity">
    <reaction evidence="1">
        <text>dTMP + ATP = dTDP + ADP</text>
        <dbReference type="Rhea" id="RHEA:13517"/>
        <dbReference type="ChEBI" id="CHEBI:30616"/>
        <dbReference type="ChEBI" id="CHEBI:58369"/>
        <dbReference type="ChEBI" id="CHEBI:63528"/>
        <dbReference type="ChEBI" id="CHEBI:456216"/>
        <dbReference type="EC" id="2.7.4.9"/>
    </reaction>
</comment>
<comment type="similarity">
    <text evidence="1">Belongs to the thymidylate kinase family.</text>
</comment>
<proteinExistence type="inferred from homology"/>
<evidence type="ECO:0000255" key="1">
    <source>
        <dbReference type="HAMAP-Rule" id="MF_00165"/>
    </source>
</evidence>
<keyword id="KW-0067">ATP-binding</keyword>
<keyword id="KW-0418">Kinase</keyword>
<keyword id="KW-0545">Nucleotide biosynthesis</keyword>
<keyword id="KW-0547">Nucleotide-binding</keyword>
<keyword id="KW-1185">Reference proteome</keyword>
<keyword id="KW-0808">Transferase</keyword>
<dbReference type="EC" id="2.7.4.9" evidence="1"/>
<dbReference type="EMBL" id="CP000153">
    <property type="protein sequence ID" value="ABB44404.1"/>
    <property type="molecule type" value="Genomic_DNA"/>
</dbReference>
<dbReference type="RefSeq" id="WP_011372756.1">
    <property type="nucleotide sequence ID" value="NC_007575.1"/>
</dbReference>
<dbReference type="SMR" id="Q30RH7"/>
<dbReference type="STRING" id="326298.Suden_1126"/>
<dbReference type="KEGG" id="tdn:Suden_1126"/>
<dbReference type="eggNOG" id="COG0125">
    <property type="taxonomic scope" value="Bacteria"/>
</dbReference>
<dbReference type="HOGENOM" id="CLU_049131_0_0_7"/>
<dbReference type="OrthoDB" id="9774907at2"/>
<dbReference type="Proteomes" id="UP000002714">
    <property type="component" value="Chromosome"/>
</dbReference>
<dbReference type="GO" id="GO:0005829">
    <property type="term" value="C:cytosol"/>
    <property type="evidence" value="ECO:0007669"/>
    <property type="project" value="TreeGrafter"/>
</dbReference>
<dbReference type="GO" id="GO:0005524">
    <property type="term" value="F:ATP binding"/>
    <property type="evidence" value="ECO:0007669"/>
    <property type="project" value="UniProtKB-UniRule"/>
</dbReference>
<dbReference type="GO" id="GO:0004798">
    <property type="term" value="F:dTMP kinase activity"/>
    <property type="evidence" value="ECO:0007669"/>
    <property type="project" value="UniProtKB-UniRule"/>
</dbReference>
<dbReference type="GO" id="GO:0006233">
    <property type="term" value="P:dTDP biosynthetic process"/>
    <property type="evidence" value="ECO:0007669"/>
    <property type="project" value="InterPro"/>
</dbReference>
<dbReference type="GO" id="GO:0006235">
    <property type="term" value="P:dTTP biosynthetic process"/>
    <property type="evidence" value="ECO:0007669"/>
    <property type="project" value="UniProtKB-UniRule"/>
</dbReference>
<dbReference type="GO" id="GO:0006227">
    <property type="term" value="P:dUDP biosynthetic process"/>
    <property type="evidence" value="ECO:0007669"/>
    <property type="project" value="TreeGrafter"/>
</dbReference>
<dbReference type="CDD" id="cd01672">
    <property type="entry name" value="TMPK"/>
    <property type="match status" value="1"/>
</dbReference>
<dbReference type="Gene3D" id="3.40.50.300">
    <property type="entry name" value="P-loop containing nucleotide triphosphate hydrolases"/>
    <property type="match status" value="1"/>
</dbReference>
<dbReference type="HAMAP" id="MF_00165">
    <property type="entry name" value="Thymidylate_kinase"/>
    <property type="match status" value="1"/>
</dbReference>
<dbReference type="InterPro" id="IPR027417">
    <property type="entry name" value="P-loop_NTPase"/>
</dbReference>
<dbReference type="InterPro" id="IPR039430">
    <property type="entry name" value="Thymidylate_kin-like_dom"/>
</dbReference>
<dbReference type="InterPro" id="IPR018094">
    <property type="entry name" value="Thymidylate_kinase"/>
</dbReference>
<dbReference type="NCBIfam" id="TIGR00041">
    <property type="entry name" value="DTMP_kinase"/>
    <property type="match status" value="1"/>
</dbReference>
<dbReference type="PANTHER" id="PTHR10344">
    <property type="entry name" value="THYMIDYLATE KINASE"/>
    <property type="match status" value="1"/>
</dbReference>
<dbReference type="PANTHER" id="PTHR10344:SF4">
    <property type="entry name" value="UMP-CMP KINASE 2, MITOCHONDRIAL"/>
    <property type="match status" value="1"/>
</dbReference>
<dbReference type="Pfam" id="PF02223">
    <property type="entry name" value="Thymidylate_kin"/>
    <property type="match status" value="1"/>
</dbReference>
<dbReference type="SUPFAM" id="SSF52540">
    <property type="entry name" value="P-loop containing nucleoside triphosphate hydrolases"/>
    <property type="match status" value="1"/>
</dbReference>
<dbReference type="PROSITE" id="PS01331">
    <property type="entry name" value="THYMIDYLATE_KINASE"/>
    <property type="match status" value="1"/>
</dbReference>
<accession>Q30RH7</accession>
<name>KTHY_SULDN</name>